<comment type="function">
    <text>Neurophysin 2 specifically binds vasopressin.</text>
</comment>
<comment type="function">
    <text evidence="1">Vasopressin has a direct antidiuretic action on the kidney, it also causes vasoconstriction of the peripheral vessels. Acts by binding to vasopressin receptors (V1bR/AVPR1B, V1aR/AVPR1A, and V2R/AVPR2) (By similarity).</text>
</comment>
<comment type="subunit">
    <text evidence="1">Interacts with vasopressin receptors V1bR/AVPR1B (Ki=85 pM), V1aR/AVPR1A (Ki=0.6 nM) and V2R/AVPR2 (Ki=4.9 nM) (By similarity). Interacts with oxytocin receptor (OXTR) (Ki=110 nM) (By similarity).</text>
</comment>
<comment type="subcellular location">
    <subcellularLocation>
        <location>Secreted</location>
    </subcellularLocation>
</comment>
<comment type="miscellaneous">
    <text>Fetal neurophysin is the major neurophysin present in the neurohypophysis of 7 to 9 month fetuses and its sequence appears to be identical with that of the adult.</text>
</comment>
<comment type="similarity">
    <text evidence="5">Belongs to the vasopressin/oxytocin family.</text>
</comment>
<organism>
    <name type="scientific">Bos taurus</name>
    <name type="common">Bovine</name>
    <dbReference type="NCBI Taxonomy" id="9913"/>
    <lineage>
        <taxon>Eukaryota</taxon>
        <taxon>Metazoa</taxon>
        <taxon>Chordata</taxon>
        <taxon>Craniata</taxon>
        <taxon>Vertebrata</taxon>
        <taxon>Euteleostomi</taxon>
        <taxon>Mammalia</taxon>
        <taxon>Eutheria</taxon>
        <taxon>Laurasiatheria</taxon>
        <taxon>Artiodactyla</taxon>
        <taxon>Ruminantia</taxon>
        <taxon>Pecora</taxon>
        <taxon>Bovidae</taxon>
        <taxon>Bovinae</taxon>
        <taxon>Bos</taxon>
    </lineage>
</organism>
<name>NEU2_BOVIN</name>
<protein>
    <recommendedName>
        <fullName>Vasopressin-neurophysin 2-copeptin</fullName>
    </recommendedName>
    <alternativeName>
        <fullName>AVP-NPII</fullName>
    </alternativeName>
    <component>
        <recommendedName>
            <fullName>Arg-vasopressin</fullName>
        </recommendedName>
        <alternativeName>
            <fullName>Arginine-vasopressin</fullName>
        </alternativeName>
    </component>
    <component>
        <recommendedName>
            <fullName>Neurophysin 2</fullName>
        </recommendedName>
        <alternativeName>
            <fullName>Neurophysin-II</fullName>
        </alternativeName>
    </component>
    <component>
        <recommendedName>
            <fullName>Copeptin</fullName>
        </recommendedName>
    </component>
</protein>
<dbReference type="EMBL" id="V00113">
    <property type="protein sequence ID" value="CAA23447.1"/>
    <property type="molecule type" value="mRNA"/>
</dbReference>
<dbReference type="EMBL" id="X00503">
    <property type="protein sequence ID" value="CAA25195.1"/>
    <property type="molecule type" value="Genomic_DNA"/>
</dbReference>
<dbReference type="EMBL" id="M25645">
    <property type="protein sequence ID" value="AAA30806.1"/>
    <property type="molecule type" value="mRNA"/>
</dbReference>
<dbReference type="EMBL" id="BC102897">
    <property type="protein sequence ID" value="AAI02898.1"/>
    <property type="molecule type" value="mRNA"/>
</dbReference>
<dbReference type="PIR" id="S09580">
    <property type="entry name" value="NVBO2"/>
</dbReference>
<dbReference type="RefSeq" id="NP_789824.1">
    <property type="nucleotide sequence ID" value="NM_176854.2"/>
</dbReference>
<dbReference type="PDB" id="1JK4">
    <property type="method" value="X-ray"/>
    <property type="resolution" value="2.30 A"/>
    <property type="chains" value="A=38-126, B=20-26"/>
</dbReference>
<dbReference type="PDB" id="1JK6">
    <property type="method" value="X-ray"/>
    <property type="resolution" value="2.40 A"/>
    <property type="chains" value="A/C=38-126"/>
</dbReference>
<dbReference type="PDB" id="1NPO">
    <property type="method" value="X-ray"/>
    <property type="resolution" value="3.00 A"/>
    <property type="chains" value="A/C=32-126"/>
</dbReference>
<dbReference type="PDB" id="2BN2">
    <property type="method" value="X-ray"/>
    <property type="resolution" value="2.80 A"/>
    <property type="chains" value="A/C/E/G=32-126"/>
</dbReference>
<dbReference type="PDBsum" id="1JK4"/>
<dbReference type="PDBsum" id="1JK6"/>
<dbReference type="PDBsum" id="1NPO"/>
<dbReference type="PDBsum" id="2BN2"/>
<dbReference type="SMR" id="P01180"/>
<dbReference type="FunCoup" id="P01180">
    <property type="interactions" value="119"/>
</dbReference>
<dbReference type="STRING" id="9913.ENSBTAP00000062113"/>
<dbReference type="GlyCosmos" id="P01180">
    <property type="glycosylation" value="1 site, No reported glycans"/>
</dbReference>
<dbReference type="GlyGen" id="P01180">
    <property type="glycosylation" value="1 site"/>
</dbReference>
<dbReference type="PaxDb" id="9913-ENSBTAP00000010555"/>
<dbReference type="GeneID" id="280728"/>
<dbReference type="KEGG" id="bta:280728"/>
<dbReference type="CTD" id="551"/>
<dbReference type="eggNOG" id="ENOG502S21K">
    <property type="taxonomic scope" value="Eukaryota"/>
</dbReference>
<dbReference type="HOGENOM" id="CLU_125770_0_0_1"/>
<dbReference type="InParanoid" id="P01180"/>
<dbReference type="OrthoDB" id="10056056at2759"/>
<dbReference type="TreeFam" id="TF333018"/>
<dbReference type="EvolutionaryTrace" id="P01180"/>
<dbReference type="Proteomes" id="UP000009136">
    <property type="component" value="Unplaced"/>
</dbReference>
<dbReference type="GO" id="GO:0005615">
    <property type="term" value="C:extracellular space"/>
    <property type="evidence" value="ECO:0000318"/>
    <property type="project" value="GO_Central"/>
</dbReference>
<dbReference type="GO" id="GO:0030141">
    <property type="term" value="C:secretory granule"/>
    <property type="evidence" value="ECO:0000318"/>
    <property type="project" value="GO_Central"/>
</dbReference>
<dbReference type="GO" id="GO:0005185">
    <property type="term" value="F:neurohypophyseal hormone activity"/>
    <property type="evidence" value="ECO:0007669"/>
    <property type="project" value="InterPro"/>
</dbReference>
<dbReference type="GO" id="GO:0005184">
    <property type="term" value="F:neuropeptide hormone activity"/>
    <property type="evidence" value="ECO:0000318"/>
    <property type="project" value="GO_Central"/>
</dbReference>
<dbReference type="GO" id="GO:0031894">
    <property type="term" value="F:V1A vasopressin receptor binding"/>
    <property type="evidence" value="ECO:0000318"/>
    <property type="project" value="GO_Central"/>
</dbReference>
<dbReference type="GO" id="GO:0042310">
    <property type="term" value="P:vasoconstriction"/>
    <property type="evidence" value="ECO:0007669"/>
    <property type="project" value="UniProtKB-KW"/>
</dbReference>
<dbReference type="FunFam" id="2.60.9.10:FF:000001">
    <property type="entry name" value="oxytocin-neurophysin 1"/>
    <property type="match status" value="1"/>
</dbReference>
<dbReference type="Gene3D" id="2.60.9.10">
    <property type="entry name" value="Neurohypophysial hormone domain"/>
    <property type="match status" value="1"/>
</dbReference>
<dbReference type="InterPro" id="IPR000981">
    <property type="entry name" value="Neurhyp_horm"/>
</dbReference>
<dbReference type="InterPro" id="IPR036387">
    <property type="entry name" value="Neurhyp_horm_dom_sf"/>
</dbReference>
<dbReference type="InterPro" id="IPR022423">
    <property type="entry name" value="Neurohypophysial_hormone_CS"/>
</dbReference>
<dbReference type="PANTHER" id="PTHR11681">
    <property type="entry name" value="NEUROPHYSIN"/>
    <property type="match status" value="1"/>
</dbReference>
<dbReference type="PANTHER" id="PTHR11681:SF9">
    <property type="entry name" value="VASOPRESSIN-NEUROPHYSIN 2-COPEPTIN"/>
    <property type="match status" value="1"/>
</dbReference>
<dbReference type="Pfam" id="PF00220">
    <property type="entry name" value="Hormone_4"/>
    <property type="match status" value="1"/>
</dbReference>
<dbReference type="Pfam" id="PF00184">
    <property type="entry name" value="Hormone_5"/>
    <property type="match status" value="1"/>
</dbReference>
<dbReference type="PIRSF" id="PIRSF001815">
    <property type="entry name" value="Nonapeptide_hormone_precursor"/>
    <property type="match status" value="1"/>
</dbReference>
<dbReference type="PRINTS" id="PR00831">
    <property type="entry name" value="NEUROPHYSIN"/>
</dbReference>
<dbReference type="SMART" id="SM00003">
    <property type="entry name" value="NH"/>
    <property type="match status" value="1"/>
</dbReference>
<dbReference type="SUPFAM" id="SSF49606">
    <property type="entry name" value="Neurophysin II"/>
    <property type="match status" value="1"/>
</dbReference>
<dbReference type="PROSITE" id="PS00264">
    <property type="entry name" value="NEUROHYPOPHYS_HORM"/>
    <property type="match status" value="1"/>
</dbReference>
<accession>P01180</accession>
<accession>Q3SZF1</accession>
<evidence type="ECO:0000250" key="1">
    <source>
        <dbReference type="UniProtKB" id="P01185"/>
    </source>
</evidence>
<evidence type="ECO:0000269" key="2">
    <source>
    </source>
</evidence>
<evidence type="ECO:0000269" key="3">
    <source>
    </source>
</evidence>
<evidence type="ECO:0000269" key="4">
    <source ref="5"/>
</evidence>
<evidence type="ECO:0000305" key="5"/>
<evidence type="ECO:0007829" key="6">
    <source>
        <dbReference type="PDB" id="1JK4"/>
    </source>
</evidence>
<evidence type="ECO:0007829" key="7">
    <source>
        <dbReference type="PDB" id="1JK6"/>
    </source>
</evidence>
<evidence type="ECO:0007829" key="8">
    <source>
        <dbReference type="PDB" id="2BN2"/>
    </source>
</evidence>
<feature type="signal peptide" evidence="2 4">
    <location>
        <begin position="1"/>
        <end position="19"/>
    </location>
</feature>
<feature type="peptide" id="PRO_0000020509" description="Arg-vasopressin">
    <location>
        <begin position="20"/>
        <end position="28"/>
    </location>
</feature>
<feature type="chain" id="PRO_0000020510" description="Neurophysin 2">
    <location>
        <begin position="32"/>
        <end position="126"/>
    </location>
</feature>
<feature type="peptide" id="PRO_0000020511" description="Copeptin">
    <location>
        <begin position="128"/>
        <end position="166"/>
    </location>
</feature>
<feature type="site" description="Important for agonist activity on V1aR/AVPR1A" evidence="1">
    <location>
        <position position="28"/>
    </location>
</feature>
<feature type="modified residue" description="Glycine amide" evidence="4">
    <location>
        <position position="28"/>
    </location>
</feature>
<feature type="glycosylation site" description="N-linked (GlcNAc...) asparagine">
    <location>
        <position position="133"/>
    </location>
</feature>
<feature type="disulfide bond" evidence="3">
    <location>
        <begin position="20"/>
        <end position="25"/>
    </location>
</feature>
<feature type="disulfide bond" evidence="3">
    <location>
        <begin position="41"/>
        <end position="85"/>
    </location>
</feature>
<feature type="disulfide bond" evidence="3">
    <location>
        <begin position="44"/>
        <end position="58"/>
    </location>
</feature>
<feature type="disulfide bond" evidence="3">
    <location>
        <begin position="52"/>
        <end position="75"/>
    </location>
</feature>
<feature type="disulfide bond" evidence="3">
    <location>
        <begin position="59"/>
        <end position="65"/>
    </location>
</feature>
<feature type="disulfide bond" evidence="3">
    <location>
        <begin position="92"/>
        <end position="104"/>
    </location>
</feature>
<feature type="disulfide bond" evidence="3">
    <location>
        <begin position="98"/>
        <end position="116"/>
    </location>
</feature>
<feature type="disulfide bond" evidence="3">
    <location>
        <begin position="105"/>
        <end position="110"/>
    </location>
</feature>
<feature type="sequence variant" description="In 30% of the molecules.">
    <original>V</original>
    <variation>I</variation>
    <location>
        <position position="120"/>
    </location>
</feature>
<feature type="turn" evidence="6">
    <location>
        <begin position="22"/>
        <end position="24"/>
    </location>
</feature>
<feature type="helix" evidence="8">
    <location>
        <begin position="35"/>
        <end position="37"/>
    </location>
</feature>
<feature type="strand" evidence="6">
    <location>
        <begin position="43"/>
        <end position="45"/>
    </location>
</feature>
<feature type="helix" evidence="6">
    <location>
        <begin position="46"/>
        <end position="48"/>
    </location>
</feature>
<feature type="strand" evidence="6">
    <location>
        <begin position="50"/>
        <end position="54"/>
    </location>
</feature>
<feature type="strand" evidence="6">
    <location>
        <begin position="57"/>
        <end position="60"/>
    </location>
</feature>
<feature type="turn" evidence="6">
    <location>
        <begin position="61"/>
        <end position="63"/>
    </location>
</feature>
<feature type="strand" evidence="6">
    <location>
        <begin position="64"/>
        <end position="69"/>
    </location>
</feature>
<feature type="helix" evidence="6">
    <location>
        <begin position="70"/>
        <end position="80"/>
    </location>
</feature>
<feature type="strand" evidence="6">
    <location>
        <begin position="89"/>
        <end position="92"/>
    </location>
</feature>
<feature type="turn" evidence="6">
    <location>
        <begin position="93"/>
        <end position="95"/>
    </location>
</feature>
<feature type="strand" evidence="6">
    <location>
        <begin position="96"/>
        <end position="100"/>
    </location>
</feature>
<feature type="strand" evidence="6">
    <location>
        <begin position="103"/>
        <end position="105"/>
    </location>
</feature>
<feature type="strand" evidence="6">
    <location>
        <begin position="110"/>
        <end position="112"/>
    </location>
</feature>
<feature type="helix" evidence="7">
    <location>
        <begin position="114"/>
        <end position="116"/>
    </location>
</feature>
<sequence>MPDATLPACFLSLLAFTSACYFQNCPRGGKRAMSDLELRQCLPCGPGGKGRCFGPSICCGDELGCFVGTAEALRCQEENYLPSPCQSGQKPCGSGGRCAAAGICCNDESCVTEPECREGVGFPRRVRANDRSNATLLDGPSGALLLRLVQLAGAPEPAEPAQPGVY</sequence>
<proteinExistence type="evidence at protein level"/>
<keyword id="KW-0002">3D-structure</keyword>
<keyword id="KW-0027">Amidation</keyword>
<keyword id="KW-0165">Cleavage on pair of basic residues</keyword>
<keyword id="KW-0903">Direct protein sequencing</keyword>
<keyword id="KW-1015">Disulfide bond</keyword>
<keyword id="KW-0325">Glycoprotein</keyword>
<keyword id="KW-0372">Hormone</keyword>
<keyword id="KW-1185">Reference proteome</keyword>
<keyword id="KW-0964">Secreted</keyword>
<keyword id="KW-0732">Signal</keyword>
<keyword id="KW-0838">Vasoactive</keyword>
<keyword id="KW-0839">Vasoconstrictor</keyword>
<reference key="1">
    <citation type="journal article" date="1982" name="Nature">
        <title>Nucleotide sequence of cloned cDNA encoding bovine arginine vasopressin-neurophysin II precursor.</title>
        <authorList>
            <person name="Land H."/>
            <person name="Schuetz G."/>
            <person name="Schmale H."/>
            <person name="Richter D."/>
        </authorList>
    </citation>
    <scope>NUCLEOTIDE SEQUENCE [MRNA]</scope>
</reference>
<reference key="2">
    <citation type="journal article" date="1984" name="Nature">
        <title>Recent gene conversion involving bovine vasopressin and oxytocin precursor genes suggested by nucleotide sequence.</title>
        <authorList>
            <person name="Ruppert S."/>
            <person name="Scherer G."/>
            <person name="Schuetz G."/>
        </authorList>
    </citation>
    <scope>NUCLEOTIDE SEQUENCE [GENOMIC DNA]</scope>
</reference>
<reference key="3">
    <citation type="journal article" date="1986" name="Biol. Chem. Hoppe-Seyler">
        <title>The neurohypophyseal hormones vasopressin and oxytocin. Precursor structure, synthesis and regulation.</title>
        <authorList>
            <person name="Rehbein M."/>
            <person name="Hillers M."/>
            <person name="Mohr E."/>
            <person name="Ivell R."/>
            <person name="Morley S."/>
            <person name="Schmale H."/>
            <person name="Richter D."/>
        </authorList>
    </citation>
    <scope>NUCLEOTIDE SEQUENCE [MRNA]</scope>
</reference>
<reference key="4">
    <citation type="submission" date="2005-08" db="EMBL/GenBank/DDBJ databases">
        <authorList>
            <consortium name="NIH - Mammalian Gene Collection (MGC) project"/>
        </authorList>
    </citation>
    <scope>NUCLEOTIDE SEQUENCE [LARGE SCALE MRNA]</scope>
    <source>
        <strain>Hereford</strain>
        <tissue>Hypothalamus</tissue>
    </source>
</reference>
<reference key="5">
    <citation type="journal article" date="1953" name="J. Am. Chem. Soc.">
        <title>Enzymatic cleavage of glycinamide from vasopressin and a proposed structure for this pressor-antidiuretic hormone of the posterior pituitary.</title>
        <authorList>
            <person name="du Vigneaud V."/>
            <person name="Lawler H.C."/>
            <person name="Popenoe E.A."/>
        </authorList>
    </citation>
    <scope>PROTEIN SEQUENCE OF 20-28</scope>
    <scope>AMIDATION AT GLY-28</scope>
</reference>
<reference key="6">
    <citation type="journal article" date="1953" name="Biochim. Biophys. Acta">
        <title>The structure of bovine vasopressin.</title>
        <authorList>
            <person name="Acher R."/>
            <person name="Chauvet J."/>
        </authorList>
    </citation>
    <scope>PROTEIN SEQUENCE OF 20-28</scope>
</reference>
<reference key="7">
    <citation type="journal article" date="1987" name="Biochem. Biophys. Res. Commun.">
        <title>Partial assignment of disulfide pairs in neurophysins.</title>
        <authorList>
            <person name="Burman S."/>
            <person name="Breslow E."/>
            <person name="Chait B.T."/>
            <person name="Chaudhary T."/>
        </authorList>
    </citation>
    <scope>PROTEIN SEQUENCE OF 32-126</scope>
</reference>
<reference key="8">
    <citation type="journal article" date="1976" name="Eur. J. Biochem.">
        <title>The neurohypophysial hormone-binding protein: complete amino-acid sequence of ovine and bovine MSEL-neurophysins.</title>
        <authorList>
            <person name="Chauvet M.-T."/>
            <person name="Chauvet J."/>
            <person name="Acher R."/>
        </authorList>
    </citation>
    <scope>PROTEIN SEQUENCE OF 32-126</scope>
</reference>
<reference key="9">
    <citation type="journal article" date="1976" name="Biochem. Biophys. Res. Commun.">
        <title>Amino acid sequence of bovine neurophysin-II: a reinvestigation.</title>
        <authorList>
            <person name="Wuu T.-C."/>
            <person name="Crumm S.E."/>
        </authorList>
    </citation>
    <scope>PROTEIN SEQUENCE OF 32-126</scope>
</reference>
<reference key="10">
    <citation type="journal article" date="1976" name="FEBS Lett.">
        <title>Foetal bovine MSEL-neurophysin: comparison with adult homologous neurophysin.</title>
        <authorList>
            <person name="Chauvet M.-T."/>
            <person name="Chauvet J."/>
            <person name="Acher R."/>
        </authorList>
    </citation>
    <scope>PRELIMINARY PROTEIN SEQUENCE (FETAL NEUROPHYSIN 2)</scope>
</reference>
<reference key="11">
    <citation type="journal article" date="1972" name="Proc. Natl. Acad. Sci. U.S.A.">
        <title>Covalent structure of bovine neurophysin-II: localization of the disulfide bonds.</title>
        <authorList>
            <person name="Schlesinger D.H."/>
            <person name="Frangione B."/>
            <person name="Walter R."/>
        </authorList>
    </citation>
    <scope>DISULFIDE BONDS IN NEUROPHYSIN 2</scope>
</reference>
<reference key="12">
    <citation type="journal article" date="1979" name="Biochem. Biophys. Res. Commun.">
        <title>A new glycopeptide in pig, ox and sheep pituitary.</title>
        <authorList>
            <person name="Smyth D.G."/>
            <person name="Massey D.E."/>
        </authorList>
    </citation>
    <scope>PROTEIN SEQUENCE OF 128-166</scope>
</reference>
<reference key="13">
    <citation type="journal article" date="1991" name="Proc. Natl. Acad. Sci. U.S.A.">
        <title>Crystal structure of a bovine neurophysin II dipeptide complex at 2.8 A determined from the single-wavelength anomalous scattering signal of an incorporated iodine atom.</title>
        <authorList>
            <person name="Chen L.Q."/>
            <person name="Rose J.P."/>
            <person name="Breslow E."/>
            <person name="Yang D."/>
            <person name="Chang W.-R."/>
            <person name="Furey W.F. Jr."/>
            <person name="Sax M."/>
            <person name="Wang B.-C."/>
        </authorList>
    </citation>
    <scope>X-RAY CRYSTALLOGRAPHY (2.8 ANGSTROMS) OF NEUROPHYSIN 2</scope>
</reference>
<reference key="14">
    <citation type="journal article" date="1996" name="Nat. Struct. Biol.">
        <title>Crystal structure of the neurophysin-oxytocin complex.</title>
        <authorList>
            <person name="Rose J.P."/>
            <person name="Wu C.-K."/>
            <person name="Hsiao C.-D."/>
            <person name="Breslow E."/>
            <person name="Wang B.-C."/>
        </authorList>
    </citation>
    <scope>X-RAY CRYSTALLOGRAPHY (3.0 ANGSTROMS) OF NEUROPHYSIN 2</scope>
    <source>
        <tissue>Pituitary</tissue>
    </source>
</reference>
<gene>
    <name type="primary">AVP</name>
</gene>